<feature type="chain" id="PRO_0000072147" description="Protein SPP41">
    <location>
        <begin position="1"/>
        <end position="1435"/>
    </location>
</feature>
<feature type="domain" description="UIM" evidence="2">
    <location>
        <begin position="171"/>
        <end position="190"/>
    </location>
</feature>
<feature type="region of interest" description="Disordered" evidence="4">
    <location>
        <begin position="16"/>
        <end position="74"/>
    </location>
</feature>
<feature type="region of interest" description="Disordered" evidence="4">
    <location>
        <begin position="88"/>
        <end position="265"/>
    </location>
</feature>
<feature type="region of interest" description="Disordered" evidence="4">
    <location>
        <begin position="286"/>
        <end position="309"/>
    </location>
</feature>
<feature type="region of interest" description="Disordered" evidence="4">
    <location>
        <begin position="322"/>
        <end position="424"/>
    </location>
</feature>
<feature type="region of interest" description="Disordered" evidence="4">
    <location>
        <begin position="442"/>
        <end position="482"/>
    </location>
</feature>
<feature type="region of interest" description="Disordered" evidence="4">
    <location>
        <begin position="519"/>
        <end position="708"/>
    </location>
</feature>
<feature type="region of interest" description="Disordered" evidence="4">
    <location>
        <begin position="934"/>
        <end position="972"/>
    </location>
</feature>
<feature type="region of interest" description="Disordered" evidence="4">
    <location>
        <begin position="1005"/>
        <end position="1125"/>
    </location>
</feature>
<feature type="short sequence motif" description="Nuclear localization signal" evidence="1">
    <location>
        <begin position="683"/>
        <end position="699"/>
    </location>
</feature>
<feature type="compositionally biased region" description="Acidic residues" evidence="4">
    <location>
        <begin position="27"/>
        <end position="42"/>
    </location>
</feature>
<feature type="compositionally biased region" description="Basic and acidic residues" evidence="4">
    <location>
        <begin position="53"/>
        <end position="63"/>
    </location>
</feature>
<feature type="compositionally biased region" description="Basic and acidic residues" evidence="4">
    <location>
        <begin position="98"/>
        <end position="127"/>
    </location>
</feature>
<feature type="compositionally biased region" description="Basic and acidic residues" evidence="4">
    <location>
        <begin position="139"/>
        <end position="154"/>
    </location>
</feature>
<feature type="compositionally biased region" description="Basic and acidic residues" evidence="4">
    <location>
        <begin position="196"/>
        <end position="205"/>
    </location>
</feature>
<feature type="compositionally biased region" description="Basic residues" evidence="4">
    <location>
        <begin position="211"/>
        <end position="223"/>
    </location>
</feature>
<feature type="compositionally biased region" description="Basic and acidic residues" evidence="4">
    <location>
        <begin position="224"/>
        <end position="234"/>
    </location>
</feature>
<feature type="compositionally biased region" description="Basic residues" evidence="4">
    <location>
        <begin position="235"/>
        <end position="249"/>
    </location>
</feature>
<feature type="compositionally biased region" description="Polar residues" evidence="4">
    <location>
        <begin position="286"/>
        <end position="301"/>
    </location>
</feature>
<feature type="compositionally biased region" description="Basic and acidic residues" evidence="4">
    <location>
        <begin position="345"/>
        <end position="355"/>
    </location>
</feature>
<feature type="compositionally biased region" description="Basic residues" evidence="4">
    <location>
        <begin position="367"/>
        <end position="383"/>
    </location>
</feature>
<feature type="compositionally biased region" description="Low complexity" evidence="4">
    <location>
        <begin position="384"/>
        <end position="398"/>
    </location>
</feature>
<feature type="compositionally biased region" description="Polar residues" evidence="4">
    <location>
        <begin position="442"/>
        <end position="451"/>
    </location>
</feature>
<feature type="compositionally biased region" description="Polar residues" evidence="4">
    <location>
        <begin position="459"/>
        <end position="482"/>
    </location>
</feature>
<feature type="compositionally biased region" description="Basic and acidic residues" evidence="4">
    <location>
        <begin position="524"/>
        <end position="548"/>
    </location>
</feature>
<feature type="compositionally biased region" description="Basic and acidic residues" evidence="4">
    <location>
        <begin position="610"/>
        <end position="628"/>
    </location>
</feature>
<feature type="compositionally biased region" description="Basic and acidic residues" evidence="4">
    <location>
        <begin position="637"/>
        <end position="652"/>
    </location>
</feature>
<feature type="compositionally biased region" description="Basic residues" evidence="4">
    <location>
        <begin position="665"/>
        <end position="674"/>
    </location>
</feature>
<feature type="compositionally biased region" description="Basic and acidic residues" evidence="4">
    <location>
        <begin position="676"/>
        <end position="691"/>
    </location>
</feature>
<feature type="compositionally biased region" description="Basic residues" evidence="4">
    <location>
        <begin position="692"/>
        <end position="706"/>
    </location>
</feature>
<feature type="compositionally biased region" description="Basic and acidic residues" evidence="4">
    <location>
        <begin position="1005"/>
        <end position="1014"/>
    </location>
</feature>
<feature type="compositionally biased region" description="Polar residues" evidence="4">
    <location>
        <begin position="1021"/>
        <end position="1032"/>
    </location>
</feature>
<feature type="compositionally biased region" description="Basic and acidic residues" evidence="4">
    <location>
        <begin position="1033"/>
        <end position="1082"/>
    </location>
</feature>
<feature type="compositionally biased region" description="Basic and acidic residues" evidence="4">
    <location>
        <begin position="1091"/>
        <end position="1103"/>
    </location>
</feature>
<feature type="compositionally biased region" description="Polar residues" evidence="4">
    <location>
        <begin position="1108"/>
        <end position="1123"/>
    </location>
</feature>
<feature type="modified residue" description="Phosphoserine" evidence="8 9">
    <location>
        <position position="1014"/>
    </location>
</feature>
<feature type="modified residue" description="Phosphoserine" evidence="7">
    <location>
        <position position="1067"/>
    </location>
</feature>
<feature type="cross-link" description="Glycyl lysine isopeptide (Lys-Gly) (interchain with G-Cter in SUMO)" evidence="5">
    <location>
        <position position="981"/>
    </location>
</feature>
<feature type="cross-link" description="Glycyl lysine isopeptide (Lys-Gly) (interchain with G-Cter in SUMO)" evidence="5">
    <location>
        <position position="1154"/>
    </location>
</feature>
<name>SPP41_YEAST</name>
<proteinExistence type="evidence at protein level"/>
<reference key="1">
    <citation type="journal article" date="1994" name="Genetics">
        <title>Extragenic suppressors of Saccharomyces cerevisiae prp4 mutations identify a negative regulator of PRP genes.</title>
        <authorList>
            <person name="Maddock J.R."/>
            <person name="Weidenhammer E.M."/>
            <person name="Adams C.C."/>
            <person name="Lunz R.L."/>
            <person name="Woolford J.L. Jr."/>
        </authorList>
    </citation>
    <scope>NUCLEOTIDE SEQUENCE [GENOMIC DNA]</scope>
    <source>
        <strain>ATCC 204626 / S288c / A364A</strain>
    </source>
</reference>
<reference key="2">
    <citation type="journal article" date="1997" name="Nature">
        <title>The nucleotide sequence of Saccharomyces cerevisiae chromosome IV.</title>
        <authorList>
            <person name="Jacq C."/>
            <person name="Alt-Moerbe J."/>
            <person name="Andre B."/>
            <person name="Arnold W."/>
            <person name="Bahr A."/>
            <person name="Ballesta J.P.G."/>
            <person name="Bargues M."/>
            <person name="Baron L."/>
            <person name="Becker A."/>
            <person name="Biteau N."/>
            <person name="Bloecker H."/>
            <person name="Blugeon C."/>
            <person name="Boskovic J."/>
            <person name="Brandt P."/>
            <person name="Brueckner M."/>
            <person name="Buitrago M.J."/>
            <person name="Coster F."/>
            <person name="Delaveau T."/>
            <person name="del Rey F."/>
            <person name="Dujon B."/>
            <person name="Eide L.G."/>
            <person name="Garcia-Cantalejo J.M."/>
            <person name="Goffeau A."/>
            <person name="Gomez-Peris A."/>
            <person name="Granotier C."/>
            <person name="Hanemann V."/>
            <person name="Hankeln T."/>
            <person name="Hoheisel J.D."/>
            <person name="Jaeger W."/>
            <person name="Jimenez A."/>
            <person name="Jonniaux J.-L."/>
            <person name="Kraemer C."/>
            <person name="Kuester H."/>
            <person name="Laamanen P."/>
            <person name="Legros Y."/>
            <person name="Louis E.J."/>
            <person name="Moeller-Rieker S."/>
            <person name="Monnet A."/>
            <person name="Moro M."/>
            <person name="Mueller-Auer S."/>
            <person name="Nussbaumer B."/>
            <person name="Paricio N."/>
            <person name="Paulin L."/>
            <person name="Perea J."/>
            <person name="Perez-Alonso M."/>
            <person name="Perez-Ortin J.E."/>
            <person name="Pohl T.M."/>
            <person name="Prydz H."/>
            <person name="Purnelle B."/>
            <person name="Rasmussen S.W."/>
            <person name="Remacha M.A."/>
            <person name="Revuelta J.L."/>
            <person name="Rieger M."/>
            <person name="Salom D."/>
            <person name="Saluz H.P."/>
            <person name="Saiz J.E."/>
            <person name="Saren A.-M."/>
            <person name="Schaefer M."/>
            <person name="Scharfe M."/>
            <person name="Schmidt E.R."/>
            <person name="Schneider C."/>
            <person name="Scholler P."/>
            <person name="Schwarz S."/>
            <person name="Soler-Mira A."/>
            <person name="Urrestarazu L.A."/>
            <person name="Verhasselt P."/>
            <person name="Vissers S."/>
            <person name="Voet M."/>
            <person name="Volckaert G."/>
            <person name="Wagner G."/>
            <person name="Wambutt R."/>
            <person name="Wedler E."/>
            <person name="Wedler H."/>
            <person name="Woelfl S."/>
            <person name="Harris D.E."/>
            <person name="Bowman S."/>
            <person name="Brown D."/>
            <person name="Churcher C.M."/>
            <person name="Connor R."/>
            <person name="Dedman K."/>
            <person name="Gentles S."/>
            <person name="Hamlin N."/>
            <person name="Hunt S."/>
            <person name="Jones L."/>
            <person name="McDonald S."/>
            <person name="Murphy L.D."/>
            <person name="Niblett D."/>
            <person name="Odell C."/>
            <person name="Oliver K."/>
            <person name="Rajandream M.A."/>
            <person name="Richards C."/>
            <person name="Shore L."/>
            <person name="Walsh S.V."/>
            <person name="Barrell B.G."/>
            <person name="Dietrich F.S."/>
            <person name="Mulligan J.T."/>
            <person name="Allen E."/>
            <person name="Araujo R."/>
            <person name="Aviles E."/>
            <person name="Berno A."/>
            <person name="Carpenter J."/>
            <person name="Chen E."/>
            <person name="Cherry J.M."/>
            <person name="Chung E."/>
            <person name="Duncan M."/>
            <person name="Hunicke-Smith S."/>
            <person name="Hyman R.W."/>
            <person name="Komp C."/>
            <person name="Lashkari D."/>
            <person name="Lew H."/>
            <person name="Lin D."/>
            <person name="Mosedale D."/>
            <person name="Nakahara K."/>
            <person name="Namath A."/>
            <person name="Oefner P."/>
            <person name="Oh C."/>
            <person name="Petel F.X."/>
            <person name="Roberts D."/>
            <person name="Schramm S."/>
            <person name="Schroeder M."/>
            <person name="Shogren T."/>
            <person name="Shroff N."/>
            <person name="Winant A."/>
            <person name="Yelton M.A."/>
            <person name="Botstein D."/>
            <person name="Davis R.W."/>
            <person name="Johnston M."/>
            <person name="Andrews S."/>
            <person name="Brinkman R."/>
            <person name="Cooper J."/>
            <person name="Ding H."/>
            <person name="Du Z."/>
            <person name="Favello A."/>
            <person name="Fulton L."/>
            <person name="Gattung S."/>
            <person name="Greco T."/>
            <person name="Hallsworth K."/>
            <person name="Hawkins J."/>
            <person name="Hillier L.W."/>
            <person name="Jier M."/>
            <person name="Johnson D."/>
            <person name="Johnston L."/>
            <person name="Kirsten J."/>
            <person name="Kucaba T."/>
            <person name="Langston Y."/>
            <person name="Latreille P."/>
            <person name="Le T."/>
            <person name="Mardis E."/>
            <person name="Menezes S."/>
            <person name="Miller N."/>
            <person name="Nhan M."/>
            <person name="Pauley A."/>
            <person name="Peluso D."/>
            <person name="Rifkin L."/>
            <person name="Riles L."/>
            <person name="Taich A."/>
            <person name="Trevaskis E."/>
            <person name="Vignati D."/>
            <person name="Wilcox L."/>
            <person name="Wohldman P."/>
            <person name="Vaudin M."/>
            <person name="Wilson R."/>
            <person name="Waterston R."/>
            <person name="Albermann K."/>
            <person name="Hani J."/>
            <person name="Heumann K."/>
            <person name="Kleine K."/>
            <person name="Mewes H.-W."/>
            <person name="Zollner A."/>
            <person name="Zaccaria P."/>
        </authorList>
    </citation>
    <scope>NUCLEOTIDE SEQUENCE [LARGE SCALE GENOMIC DNA]</scope>
    <source>
        <strain>ATCC 204508 / S288c</strain>
    </source>
</reference>
<reference key="3">
    <citation type="journal article" date="2014" name="G3 (Bethesda)">
        <title>The reference genome sequence of Saccharomyces cerevisiae: Then and now.</title>
        <authorList>
            <person name="Engel S.R."/>
            <person name="Dietrich F.S."/>
            <person name="Fisk D.G."/>
            <person name="Binkley G."/>
            <person name="Balakrishnan R."/>
            <person name="Costanzo M.C."/>
            <person name="Dwight S.S."/>
            <person name="Hitz B.C."/>
            <person name="Karra K."/>
            <person name="Nash R.S."/>
            <person name="Weng S."/>
            <person name="Wong E.D."/>
            <person name="Lloyd P."/>
            <person name="Skrzypek M.S."/>
            <person name="Miyasato S.R."/>
            <person name="Simison M."/>
            <person name="Cherry J.M."/>
        </authorList>
    </citation>
    <scope>GENOME REANNOTATION</scope>
    <source>
        <strain>ATCC 204508 / S288c</strain>
    </source>
</reference>
<reference key="4">
    <citation type="journal article" date="2004" name="J. Biol. Chem.">
        <title>Global analyses of sumoylated proteins in Saccharomyces cerevisiae. Induction of protein sumoylation by cellular stresses.</title>
        <authorList>
            <person name="Zhou W."/>
            <person name="Ryan J.J."/>
            <person name="Zhou H."/>
        </authorList>
    </citation>
    <scope>SUMOYLATION [LARGE SCALE ANALYSIS] AT LYS-981 AND LYS-1154</scope>
    <scope>IDENTIFICATION BY MASS SPECTROMETRY</scope>
</reference>
<reference key="5">
    <citation type="journal article" date="2007" name="J. Proteome Res.">
        <title>Large-scale phosphorylation analysis of alpha-factor-arrested Saccharomyces cerevisiae.</title>
        <authorList>
            <person name="Li X."/>
            <person name="Gerber S.A."/>
            <person name="Rudner A.D."/>
            <person name="Beausoleil S.A."/>
            <person name="Haas W."/>
            <person name="Villen J."/>
            <person name="Elias J.E."/>
            <person name="Gygi S.P."/>
        </authorList>
    </citation>
    <scope>PHOSPHORYLATION [LARGE SCALE ANALYSIS] AT SER-1067</scope>
    <scope>IDENTIFICATION BY MASS SPECTROMETRY [LARGE SCALE ANALYSIS]</scope>
    <source>
        <strain>ADR376</strain>
    </source>
</reference>
<reference key="6">
    <citation type="journal article" date="2008" name="Mol. Cell. Proteomics">
        <title>A multidimensional chromatography technology for in-depth phosphoproteome analysis.</title>
        <authorList>
            <person name="Albuquerque C.P."/>
            <person name="Smolka M.B."/>
            <person name="Payne S.H."/>
            <person name="Bafna V."/>
            <person name="Eng J."/>
            <person name="Zhou H."/>
        </authorList>
    </citation>
    <scope>PHOSPHORYLATION [LARGE SCALE ANALYSIS] AT SER-1014</scope>
    <scope>IDENTIFICATION BY MASS SPECTROMETRY [LARGE SCALE ANALYSIS]</scope>
</reference>
<reference key="7">
    <citation type="journal article" date="2009" name="Science">
        <title>Global analysis of Cdk1 substrate phosphorylation sites provides insights into evolution.</title>
        <authorList>
            <person name="Holt L.J."/>
            <person name="Tuch B.B."/>
            <person name="Villen J."/>
            <person name="Johnson A.D."/>
            <person name="Gygi S.P."/>
            <person name="Morgan D.O."/>
        </authorList>
    </citation>
    <scope>PHOSPHORYLATION [LARGE SCALE ANALYSIS] AT SER-1014</scope>
    <scope>IDENTIFICATION BY MASS SPECTROMETRY [LARGE SCALE ANALYSIS]</scope>
</reference>
<gene>
    <name type="primary">SPP41</name>
    <name type="ordered locus">YDR464W</name>
</gene>
<protein>
    <recommendedName>
        <fullName>Protein SPP41</fullName>
    </recommendedName>
</protein>
<sequence>MAYDEDDGEINFNELVGNLLSSHNQEGQEEGEVQGGEQEGDDFEKIYPTSENIEPKHPDDSQHMHNSPDQNIEIPHFVDEEDELVSVVANAVQNIDDEQAKPENHLENGSEHVTSDTADDNHEKEQQQEWAHILQQEILKSDGEPLRENTERRVSTSQHHPSQRTDDALDQDDENLRMAILESLQELNTNEEEEKEPEKHEHAAPNDKLSSKKSSKKKKKDKSKNRESSKDKSSKKSKSSSHSKKHAKDRNKEKQSKPTNNENTLDLSNILENLIHENDNAAIDTAKQTVDIQDNSHTDNTNNEDVEAQALVEATLKAFENELLSSAPTEEPSQEQSIGPVSSRKAVEPPRKPTADDIPLAMLQAFKPKKRPPQEKKKTKSKTSKAASTANKSPASESTSKKKKKKKTVKESNKSQEAYEDDEFSRILADMVNQVVNTSLKETSTHTATQDNKLESESDFTSPVQSQYTTEDASTANDDSLDLNQIMQNAMAMVFQNQNDDEFDENIVEDFNRGLGDLSVSDLLPHDNLSRMEKKSVPKSSSKSEKKTAISRRASKKASRDASSVELTEVPSKPKKPSKTEVSLEKKLRKKYVSIANEAASVARKKRWAKNKELKEKEKLERQTAREERRHKKKLEKQRLAEEQEELKKIVERGPPYPPDLRLTKSGKPKKPYRRWTPEELLKRSQEAEKPRKVKKERKKKEKKMKVPSSALKKIPLFNFVKGNVQPSARHRLNDIEGSLSTIGLHKSPDGVRRILSRPKSEDHEWPLSDSSASQNYDAHLKTVVHKEKIPFHPPWTIPSQPPFALPVARRKKIPNIKKYRKRTNNSFRVSKEGTASTRNRILPAILLPIINTLKAAAKSQTAAGATPEEARKRLATIIQHAKSTVIRAALQARKNSMQAAHSKGTTTELATTASRMKNPLKMIPIFNTSRVKQQLDKQLPARSAGTEISSSESPDKATPDPHSNSTIAGHTLKGVTTPIKIEDSDANVPPVSIAVSTIEPSQDKLELTKRAESVEPVENNVETAKETQSVQEIKENVGTKASEEVTLTEDKTNGDPKNEKRILIESPVEKTDKKKPGEKIATDLNEDASLSDKKDGDEKSTLHSDAAQLTGNEPDSVNTTTGKPKLIDVSLKPLNEAKPKIPIIFPLKRPQIKPEVSVINLVQNLVNTKIPEIKNESVDLGSNITDILSSTITNILPEITATDVKNYQYEDENVKYLKKTPRQVLNLDGLVPPSGRCITKAKRVRRIKKLSADATTAPEADGKANSESITYTFDIPSPEEVQSKRSVVLKFAKARLTEAELSCLKKEINNVRKRRWREMNSTKNWEYDVKSRLKKRANAFFGEGESETKSKWIEERFQEKVSQEKYKDRLETTETQANNTKIVIDDKEILNILAVNMNNLNKARCIEKDIQESFREEKLASLQPKKKRKKSILH</sequence>
<organism>
    <name type="scientific">Saccharomyces cerevisiae (strain ATCC 204508 / S288c)</name>
    <name type="common">Baker's yeast</name>
    <dbReference type="NCBI Taxonomy" id="559292"/>
    <lineage>
        <taxon>Eukaryota</taxon>
        <taxon>Fungi</taxon>
        <taxon>Dikarya</taxon>
        <taxon>Ascomycota</taxon>
        <taxon>Saccharomycotina</taxon>
        <taxon>Saccharomycetes</taxon>
        <taxon>Saccharomycetales</taxon>
        <taxon>Saccharomycetaceae</taxon>
        <taxon>Saccharomyces</taxon>
    </lineage>
</organism>
<evidence type="ECO:0000255" key="1"/>
<evidence type="ECO:0000255" key="2">
    <source>
        <dbReference type="PROSITE-ProRule" id="PRU00213"/>
    </source>
</evidence>
<evidence type="ECO:0000255" key="3">
    <source>
        <dbReference type="PROSITE-ProRule" id="PRU00267"/>
    </source>
</evidence>
<evidence type="ECO:0000256" key="4">
    <source>
        <dbReference type="SAM" id="MobiDB-lite"/>
    </source>
</evidence>
<evidence type="ECO:0000269" key="5">
    <source>
    </source>
</evidence>
<evidence type="ECO:0000305" key="6"/>
<evidence type="ECO:0007744" key="7">
    <source>
    </source>
</evidence>
<evidence type="ECO:0007744" key="8">
    <source>
    </source>
</evidence>
<evidence type="ECO:0007744" key="9">
    <source>
    </source>
</evidence>
<accession>P38904</accession>
<accession>D6VT89</accession>
<accession>Q03291</accession>
<comment type="function">
    <text>Negative regulator of PRP3 and PRP4 genes.</text>
</comment>
<comment type="subunit">
    <text>Interacts with PRP8 and RAP1.</text>
</comment>
<comment type="subcellular location">
    <subcellularLocation>
        <location evidence="3">Nucleus</location>
    </subcellularLocation>
</comment>
<comment type="sequence caution" evidence="6">
    <conflict type="frameshift">
        <sequence resource="EMBL-CDS" id="AAA20494"/>
    </conflict>
</comment>
<dbReference type="EMBL" id="U03673">
    <property type="protein sequence ID" value="AAA20494.1"/>
    <property type="status" value="ALT_FRAME"/>
    <property type="molecule type" value="Genomic_DNA"/>
</dbReference>
<dbReference type="EMBL" id="U33050">
    <property type="protein sequence ID" value="AAB64901.1"/>
    <property type="molecule type" value="Genomic_DNA"/>
</dbReference>
<dbReference type="EMBL" id="BK006938">
    <property type="protein sequence ID" value="DAA12299.1"/>
    <property type="molecule type" value="Genomic_DNA"/>
</dbReference>
<dbReference type="PIR" id="S69632">
    <property type="entry name" value="S69632"/>
</dbReference>
<dbReference type="RefSeq" id="NP_010752.3">
    <property type="nucleotide sequence ID" value="NM_001180772.3"/>
</dbReference>
<dbReference type="SMR" id="P38904"/>
<dbReference type="BioGRID" id="32518">
    <property type="interactions" value="295"/>
</dbReference>
<dbReference type="DIP" id="DIP-2331N"/>
<dbReference type="FunCoup" id="P38904">
    <property type="interactions" value="53"/>
</dbReference>
<dbReference type="IntAct" id="P38904">
    <property type="interactions" value="7"/>
</dbReference>
<dbReference type="STRING" id="4932.YDR464W"/>
<dbReference type="iPTMnet" id="P38904"/>
<dbReference type="PaxDb" id="4932-YDR464W"/>
<dbReference type="PeptideAtlas" id="P38904"/>
<dbReference type="EnsemblFungi" id="YDR464W_mRNA">
    <property type="protein sequence ID" value="YDR464W"/>
    <property type="gene ID" value="YDR464W"/>
</dbReference>
<dbReference type="GeneID" id="852075"/>
<dbReference type="KEGG" id="sce:YDR464W"/>
<dbReference type="AGR" id="SGD:S000002872"/>
<dbReference type="SGD" id="S000002872">
    <property type="gene designation" value="SPP41"/>
</dbReference>
<dbReference type="VEuPathDB" id="FungiDB:YDR464W"/>
<dbReference type="eggNOG" id="ENOG502S97X">
    <property type="taxonomic scope" value="Eukaryota"/>
</dbReference>
<dbReference type="HOGENOM" id="CLU_251351_0_0_1"/>
<dbReference type="InParanoid" id="P38904"/>
<dbReference type="OMA" id="KGPPYPA"/>
<dbReference type="OrthoDB" id="5595797at2759"/>
<dbReference type="BioCyc" id="YEAST:G3O-29992-MONOMER"/>
<dbReference type="BioGRID-ORCS" id="852075">
    <property type="hits" value="0 hits in 10 CRISPR screens"/>
</dbReference>
<dbReference type="PRO" id="PR:P38904"/>
<dbReference type="Proteomes" id="UP000002311">
    <property type="component" value="Chromosome IV"/>
</dbReference>
<dbReference type="RNAct" id="P38904">
    <property type="molecule type" value="protein"/>
</dbReference>
<dbReference type="GO" id="GO:0005829">
    <property type="term" value="C:cytosol"/>
    <property type="evidence" value="ECO:0000314"/>
    <property type="project" value="SGD"/>
</dbReference>
<dbReference type="GO" id="GO:0005634">
    <property type="term" value="C:nucleus"/>
    <property type="evidence" value="ECO:0000314"/>
    <property type="project" value="SGD"/>
</dbReference>
<dbReference type="GO" id="GO:0010629">
    <property type="term" value="P:negative regulation of gene expression"/>
    <property type="evidence" value="ECO:0000315"/>
    <property type="project" value="SGD"/>
</dbReference>
<dbReference type="InterPro" id="IPR009071">
    <property type="entry name" value="HMG_box_dom"/>
</dbReference>
<dbReference type="InterPro" id="IPR021386">
    <property type="entry name" value="SPP41_DUF3020"/>
</dbReference>
<dbReference type="InterPro" id="IPR003903">
    <property type="entry name" value="UIM_dom"/>
</dbReference>
<dbReference type="Pfam" id="PF11223">
    <property type="entry name" value="DUF3020"/>
    <property type="match status" value="2"/>
</dbReference>
<dbReference type="PROSITE" id="PS50118">
    <property type="entry name" value="HMG_BOX_2"/>
    <property type="match status" value="1"/>
</dbReference>
<dbReference type="PROSITE" id="PS50330">
    <property type="entry name" value="UIM"/>
    <property type="match status" value="1"/>
</dbReference>
<keyword id="KW-1017">Isopeptide bond</keyword>
<keyword id="KW-0539">Nucleus</keyword>
<keyword id="KW-0597">Phosphoprotein</keyword>
<keyword id="KW-1185">Reference proteome</keyword>
<keyword id="KW-0832">Ubl conjugation</keyword>